<proteinExistence type="evidence at protein level"/>
<protein>
    <recommendedName>
        <fullName>Apolipoprotein C-I</fullName>
        <shortName>Apo-CI</shortName>
        <shortName>ApoC-I</shortName>
    </recommendedName>
    <alternativeName>
        <fullName>Apolipoprotein C1</fullName>
    </alternativeName>
    <component>
        <recommendedName>
            <fullName>Truncated apolipoprotein C-I</fullName>
        </recommendedName>
    </component>
</protein>
<keyword id="KW-0903">Direct protein sequencing</keyword>
<keyword id="KW-0445">Lipid transport</keyword>
<keyword id="KW-1185">Reference proteome</keyword>
<keyword id="KW-0964">Secreted</keyword>
<keyword id="KW-0732">Signal</keyword>
<keyword id="KW-0813">Transport</keyword>
<keyword id="KW-0850">VLDL</keyword>
<comment type="function">
    <text evidence="2 3 6">Inhibitor of lipoprotein binding to the low density lipoprotein (LDL) receptor, LDL receptor-related protein, and very low density lipoprotein (VLDL) receptor. Associates with high density lipoproteins (HDL) and the triacylglycerol-rich lipoproteins in the plasma and makes up about 10% of the protein of the VLDL and 2% of that of HDL. Appears to interfere directly with fatty acid uptake and is also the major plasma inhibitor of cholesteryl ester transfer protein (CETP). Modulates the interaction of APOE with beta-migrating VLDL and inhibits binding of beta-VLDL to the LDL receptor-related protein (By similarity). Binds free fatty acids and reduces their intracellular esterification.</text>
</comment>
<comment type="subcellular location">
    <subcellularLocation>
        <location evidence="2">Secreted</location>
    </subcellularLocation>
</comment>
<comment type="tissue specificity">
    <text evidence="7">Adult and fetal liver.</text>
</comment>
<comment type="mass spectrometry" mass="6993.0" error="0.707" method="Electrospray" evidence="5">
    <molecule>Apolipoprotein C-I</molecule>
    <text>Strain C57BL/6. Without methionine sulfoxide.</text>
</comment>
<comment type="mass spectrometry" mass="6825.6" error="0.495" method="Electrospray" evidence="5">
    <molecule>Truncated apolipoprotein C-I</molecule>
    <text>Strain C57BL/6. Without methionine sulfoxide.</text>
</comment>
<comment type="similarity">
    <text evidence="8">Belongs to the apolipoprotein C1 family.</text>
</comment>
<accession>P34928</accession>
<accession>Q505B2</accession>
<evidence type="ECO:0000250" key="1"/>
<evidence type="ECO:0000250" key="2">
    <source>
        <dbReference type="UniProtKB" id="P02654"/>
    </source>
</evidence>
<evidence type="ECO:0000250" key="3">
    <source>
        <dbReference type="UniProtKB" id="P33047"/>
    </source>
</evidence>
<evidence type="ECO:0000250" key="4">
    <source>
        <dbReference type="UniProtKB" id="P86336"/>
    </source>
</evidence>
<evidence type="ECO:0000269" key="5">
    <source>
    </source>
</evidence>
<evidence type="ECO:0000269" key="6">
    <source>
    </source>
</evidence>
<evidence type="ECO:0000269" key="7">
    <source>
    </source>
</evidence>
<evidence type="ECO:0000305" key="8"/>
<gene>
    <name type="primary">Apoc1</name>
</gene>
<name>APOC1_MOUSE</name>
<sequence length="88" mass="9696">MRLFIALPVLIVVVAMTLEGPAPAQAAPDLSGTLESIPDKLKEFGNTLEDKARAAIEHIKQKEILTKTRAWFSEAFGKVKEKLKTTFS</sequence>
<organism>
    <name type="scientific">Mus musculus</name>
    <name type="common">Mouse</name>
    <dbReference type="NCBI Taxonomy" id="10090"/>
    <lineage>
        <taxon>Eukaryota</taxon>
        <taxon>Metazoa</taxon>
        <taxon>Chordata</taxon>
        <taxon>Craniata</taxon>
        <taxon>Vertebrata</taxon>
        <taxon>Euteleostomi</taxon>
        <taxon>Mammalia</taxon>
        <taxon>Eutheria</taxon>
        <taxon>Euarchontoglires</taxon>
        <taxon>Glires</taxon>
        <taxon>Rodentia</taxon>
        <taxon>Myomorpha</taxon>
        <taxon>Muroidea</taxon>
        <taxon>Muridae</taxon>
        <taxon>Murinae</taxon>
        <taxon>Mus</taxon>
        <taxon>Mus</taxon>
    </lineage>
</organism>
<reference key="1">
    <citation type="journal article" date="1993" name="Genomics">
        <title>The mouse apolipoprotein C1 gene: structure and expression.</title>
        <authorList>
            <person name="Hoffer M.J.V."/>
            <person name="van Eck M.M."/>
            <person name="Havekes L.M."/>
            <person name="Hofker M.H."/>
            <person name="Frants R.R."/>
        </authorList>
    </citation>
    <scope>NUCLEOTIDE SEQUENCE [GENOMIC DNA]</scope>
    <scope>TISSUE SPECIFICITY</scope>
</reference>
<reference key="2">
    <citation type="journal article" date="2005" name="Science">
        <title>The transcriptional landscape of the mammalian genome.</title>
        <authorList>
            <person name="Carninci P."/>
            <person name="Kasukawa T."/>
            <person name="Katayama S."/>
            <person name="Gough J."/>
            <person name="Frith M.C."/>
            <person name="Maeda N."/>
            <person name="Oyama R."/>
            <person name="Ravasi T."/>
            <person name="Lenhard B."/>
            <person name="Wells C."/>
            <person name="Kodzius R."/>
            <person name="Shimokawa K."/>
            <person name="Bajic V.B."/>
            <person name="Brenner S.E."/>
            <person name="Batalov S."/>
            <person name="Forrest A.R."/>
            <person name="Zavolan M."/>
            <person name="Davis M.J."/>
            <person name="Wilming L.G."/>
            <person name="Aidinis V."/>
            <person name="Allen J.E."/>
            <person name="Ambesi-Impiombato A."/>
            <person name="Apweiler R."/>
            <person name="Aturaliya R.N."/>
            <person name="Bailey T.L."/>
            <person name="Bansal M."/>
            <person name="Baxter L."/>
            <person name="Beisel K.W."/>
            <person name="Bersano T."/>
            <person name="Bono H."/>
            <person name="Chalk A.M."/>
            <person name="Chiu K.P."/>
            <person name="Choudhary V."/>
            <person name="Christoffels A."/>
            <person name="Clutterbuck D.R."/>
            <person name="Crowe M.L."/>
            <person name="Dalla E."/>
            <person name="Dalrymple B.P."/>
            <person name="de Bono B."/>
            <person name="Della Gatta G."/>
            <person name="di Bernardo D."/>
            <person name="Down T."/>
            <person name="Engstrom P."/>
            <person name="Fagiolini M."/>
            <person name="Faulkner G."/>
            <person name="Fletcher C.F."/>
            <person name="Fukushima T."/>
            <person name="Furuno M."/>
            <person name="Futaki S."/>
            <person name="Gariboldi M."/>
            <person name="Georgii-Hemming P."/>
            <person name="Gingeras T.R."/>
            <person name="Gojobori T."/>
            <person name="Green R.E."/>
            <person name="Gustincich S."/>
            <person name="Harbers M."/>
            <person name="Hayashi Y."/>
            <person name="Hensch T.K."/>
            <person name="Hirokawa N."/>
            <person name="Hill D."/>
            <person name="Huminiecki L."/>
            <person name="Iacono M."/>
            <person name="Ikeo K."/>
            <person name="Iwama A."/>
            <person name="Ishikawa T."/>
            <person name="Jakt M."/>
            <person name="Kanapin A."/>
            <person name="Katoh M."/>
            <person name="Kawasawa Y."/>
            <person name="Kelso J."/>
            <person name="Kitamura H."/>
            <person name="Kitano H."/>
            <person name="Kollias G."/>
            <person name="Krishnan S.P."/>
            <person name="Kruger A."/>
            <person name="Kummerfeld S.K."/>
            <person name="Kurochkin I.V."/>
            <person name="Lareau L.F."/>
            <person name="Lazarevic D."/>
            <person name="Lipovich L."/>
            <person name="Liu J."/>
            <person name="Liuni S."/>
            <person name="McWilliam S."/>
            <person name="Madan Babu M."/>
            <person name="Madera M."/>
            <person name="Marchionni L."/>
            <person name="Matsuda H."/>
            <person name="Matsuzawa S."/>
            <person name="Miki H."/>
            <person name="Mignone F."/>
            <person name="Miyake S."/>
            <person name="Morris K."/>
            <person name="Mottagui-Tabar S."/>
            <person name="Mulder N."/>
            <person name="Nakano N."/>
            <person name="Nakauchi H."/>
            <person name="Ng P."/>
            <person name="Nilsson R."/>
            <person name="Nishiguchi S."/>
            <person name="Nishikawa S."/>
            <person name="Nori F."/>
            <person name="Ohara O."/>
            <person name="Okazaki Y."/>
            <person name="Orlando V."/>
            <person name="Pang K.C."/>
            <person name="Pavan W.J."/>
            <person name="Pavesi G."/>
            <person name="Pesole G."/>
            <person name="Petrovsky N."/>
            <person name="Piazza S."/>
            <person name="Reed J."/>
            <person name="Reid J.F."/>
            <person name="Ring B.Z."/>
            <person name="Ringwald M."/>
            <person name="Rost B."/>
            <person name="Ruan Y."/>
            <person name="Salzberg S.L."/>
            <person name="Sandelin A."/>
            <person name="Schneider C."/>
            <person name="Schoenbach C."/>
            <person name="Sekiguchi K."/>
            <person name="Semple C.A."/>
            <person name="Seno S."/>
            <person name="Sessa L."/>
            <person name="Sheng Y."/>
            <person name="Shibata Y."/>
            <person name="Shimada H."/>
            <person name="Shimada K."/>
            <person name="Silva D."/>
            <person name="Sinclair B."/>
            <person name="Sperling S."/>
            <person name="Stupka E."/>
            <person name="Sugiura K."/>
            <person name="Sultana R."/>
            <person name="Takenaka Y."/>
            <person name="Taki K."/>
            <person name="Tammoja K."/>
            <person name="Tan S.L."/>
            <person name="Tang S."/>
            <person name="Taylor M.S."/>
            <person name="Tegner J."/>
            <person name="Teichmann S.A."/>
            <person name="Ueda H.R."/>
            <person name="van Nimwegen E."/>
            <person name="Verardo R."/>
            <person name="Wei C.L."/>
            <person name="Yagi K."/>
            <person name="Yamanishi H."/>
            <person name="Zabarovsky E."/>
            <person name="Zhu S."/>
            <person name="Zimmer A."/>
            <person name="Hide W."/>
            <person name="Bult C."/>
            <person name="Grimmond S.M."/>
            <person name="Teasdale R.D."/>
            <person name="Liu E.T."/>
            <person name="Brusic V."/>
            <person name="Quackenbush J."/>
            <person name="Wahlestedt C."/>
            <person name="Mattick J.S."/>
            <person name="Hume D.A."/>
            <person name="Kai C."/>
            <person name="Sasaki D."/>
            <person name="Tomaru Y."/>
            <person name="Fukuda S."/>
            <person name="Kanamori-Katayama M."/>
            <person name="Suzuki M."/>
            <person name="Aoki J."/>
            <person name="Arakawa T."/>
            <person name="Iida J."/>
            <person name="Imamura K."/>
            <person name="Itoh M."/>
            <person name="Kato T."/>
            <person name="Kawaji H."/>
            <person name="Kawagashira N."/>
            <person name="Kawashima T."/>
            <person name="Kojima M."/>
            <person name="Kondo S."/>
            <person name="Konno H."/>
            <person name="Nakano K."/>
            <person name="Ninomiya N."/>
            <person name="Nishio T."/>
            <person name="Okada M."/>
            <person name="Plessy C."/>
            <person name="Shibata K."/>
            <person name="Shiraki T."/>
            <person name="Suzuki S."/>
            <person name="Tagami M."/>
            <person name="Waki K."/>
            <person name="Watahiki A."/>
            <person name="Okamura-Oho Y."/>
            <person name="Suzuki H."/>
            <person name="Kawai J."/>
            <person name="Hayashizaki Y."/>
        </authorList>
    </citation>
    <scope>NUCLEOTIDE SEQUENCE [LARGE SCALE MRNA]</scope>
    <source>
        <strain>C57BL/6J</strain>
    </source>
</reference>
<reference key="3">
    <citation type="journal article" date="2004" name="Genome Res.">
        <title>The status, quality, and expansion of the NIH full-length cDNA project: the Mammalian Gene Collection (MGC).</title>
        <authorList>
            <consortium name="The MGC Project Team"/>
        </authorList>
    </citation>
    <scope>NUCLEOTIDE SEQUENCE [LARGE SCALE MRNA]</scope>
    <source>
        <strain>C57BL/6J</strain>
        <strain>FVB/N</strain>
        <tissue>Liver</tissue>
        <tissue>Mammary gland</tissue>
    </source>
</reference>
<reference key="4">
    <citation type="journal article" date="2006" name="Biochim. Biophys. Acta">
        <title>Mass spectral analysis of the apolipoproteins on mouse high density lipoproteins. Detection of post-translational modifications.</title>
        <authorList>
            <person name="Puppione D.L."/>
            <person name="Yam L.M."/>
            <person name="Bassilian S."/>
            <person name="Souda P."/>
            <person name="Castellani L.W."/>
            <person name="Schumaker V.N."/>
            <person name="Whitelegge J.P."/>
        </authorList>
    </citation>
    <scope>PROTEIN SEQUENCE OF 43-51</scope>
    <scope>MASS SPECTROMETRY</scope>
</reference>
<reference key="5">
    <citation type="journal article" date="2007" name="J. Lipid Res.">
        <title>Apolipoprotein C-I binds free fatty acids and reduces their intracellular esterification.</title>
        <authorList>
            <person name="Westerterp M."/>
            <person name="Berbee J.F."/>
            <person name="Delsing D.J."/>
            <person name="Jong M.C."/>
            <person name="Gijbels M.J."/>
            <person name="Dahlmans V.E."/>
            <person name="Offerman E.H."/>
            <person name="Romijn J.A."/>
            <person name="Havekes L.M."/>
            <person name="Rensen P.C."/>
        </authorList>
    </citation>
    <scope>FUNCTION</scope>
</reference>
<dbReference type="EMBL" id="Z22661">
    <property type="protein sequence ID" value="CAA80375.1"/>
    <property type="molecule type" value="Genomic_DNA"/>
</dbReference>
<dbReference type="EMBL" id="Z22660">
    <property type="protein sequence ID" value="CAA80375.1"/>
    <property type="status" value="JOINED"/>
    <property type="molecule type" value="Genomic_DNA"/>
</dbReference>
<dbReference type="EMBL" id="AK011358">
    <property type="protein sequence ID" value="BAB27566.1"/>
    <property type="molecule type" value="mRNA"/>
</dbReference>
<dbReference type="EMBL" id="BC019398">
    <property type="protein sequence ID" value="AAH19398.1"/>
    <property type="molecule type" value="mRNA"/>
</dbReference>
<dbReference type="EMBL" id="BC094638">
    <property type="protein sequence ID" value="AAH94638.1"/>
    <property type="molecule type" value="mRNA"/>
</dbReference>
<dbReference type="CCDS" id="CCDS39802.1"/>
<dbReference type="PIR" id="I48251">
    <property type="entry name" value="I48251"/>
</dbReference>
<dbReference type="RefSeq" id="NP_001103479.1">
    <property type="nucleotide sequence ID" value="NM_001110009.2"/>
</dbReference>
<dbReference type="RefSeq" id="NP_031495.1">
    <property type="nucleotide sequence ID" value="NM_007469.5"/>
</dbReference>
<dbReference type="SMR" id="P34928"/>
<dbReference type="FunCoup" id="P34928">
    <property type="interactions" value="13"/>
</dbReference>
<dbReference type="STRING" id="10090.ENSMUSP00000104091"/>
<dbReference type="iPTMnet" id="P34928"/>
<dbReference type="PhosphoSitePlus" id="P34928"/>
<dbReference type="jPOST" id="P34928"/>
<dbReference type="PaxDb" id="10090-ENSMUSP00000104091"/>
<dbReference type="PeptideAtlas" id="P34928"/>
<dbReference type="ProteomicsDB" id="283161"/>
<dbReference type="Antibodypedia" id="17780">
    <property type="antibodies" value="374 antibodies from 34 providers"/>
</dbReference>
<dbReference type="DNASU" id="11812"/>
<dbReference type="Ensembl" id="ENSMUST00000045035.12">
    <property type="protein sequence ID" value="ENSMUSP00000045571.5"/>
    <property type="gene ID" value="ENSMUSG00000040564.15"/>
</dbReference>
<dbReference type="Ensembl" id="ENSMUST00000108451.4">
    <property type="protein sequence ID" value="ENSMUSP00000104091.3"/>
    <property type="gene ID" value="ENSMUSG00000040564.15"/>
</dbReference>
<dbReference type="GeneID" id="11812"/>
<dbReference type="KEGG" id="mmu:11812"/>
<dbReference type="UCSC" id="uc009fmv.3">
    <property type="organism name" value="mouse"/>
</dbReference>
<dbReference type="AGR" id="MGI:88053"/>
<dbReference type="CTD" id="341"/>
<dbReference type="MGI" id="MGI:88053">
    <property type="gene designation" value="Apoc1"/>
</dbReference>
<dbReference type="VEuPathDB" id="HostDB:ENSMUSG00000040564"/>
<dbReference type="eggNOG" id="ENOG502SEU4">
    <property type="taxonomic scope" value="Eukaryota"/>
</dbReference>
<dbReference type="GeneTree" id="ENSGT00390000011584"/>
<dbReference type="HOGENOM" id="CLU_160094_1_0_1"/>
<dbReference type="InParanoid" id="P34928"/>
<dbReference type="OMA" id="GTSTRNW"/>
<dbReference type="OrthoDB" id="8941712at2759"/>
<dbReference type="PhylomeDB" id="P34928"/>
<dbReference type="TreeFam" id="TF330940"/>
<dbReference type="Reactome" id="R-MMU-8866423">
    <property type="pathway name" value="VLDL assembly"/>
</dbReference>
<dbReference type="Reactome" id="R-MMU-8964046">
    <property type="pathway name" value="VLDL clearance"/>
</dbReference>
<dbReference type="BioGRID-ORCS" id="11812">
    <property type="hits" value="2 hits in 81 CRISPR screens"/>
</dbReference>
<dbReference type="ChiTaRS" id="Apoc1">
    <property type="organism name" value="mouse"/>
</dbReference>
<dbReference type="PRO" id="PR:P34928"/>
<dbReference type="Proteomes" id="UP000000589">
    <property type="component" value="Chromosome 7"/>
</dbReference>
<dbReference type="RNAct" id="P34928">
    <property type="molecule type" value="protein"/>
</dbReference>
<dbReference type="Bgee" id="ENSMUSG00000040564">
    <property type="expression patterns" value="Expressed in left lobe of liver and 143 other cell types or tissues"/>
</dbReference>
<dbReference type="ExpressionAtlas" id="P34928">
    <property type="expression patterns" value="baseline and differential"/>
</dbReference>
<dbReference type="GO" id="GO:0005783">
    <property type="term" value="C:endoplasmic reticulum"/>
    <property type="evidence" value="ECO:0007669"/>
    <property type="project" value="Ensembl"/>
</dbReference>
<dbReference type="GO" id="GO:0005576">
    <property type="term" value="C:extracellular region"/>
    <property type="evidence" value="ECO:0000304"/>
    <property type="project" value="Reactome"/>
</dbReference>
<dbReference type="GO" id="GO:0034364">
    <property type="term" value="C:high-density lipoprotein particle"/>
    <property type="evidence" value="ECO:0007669"/>
    <property type="project" value="Ensembl"/>
</dbReference>
<dbReference type="GO" id="GO:0034361">
    <property type="term" value="C:very-low-density lipoprotein particle"/>
    <property type="evidence" value="ECO:0007669"/>
    <property type="project" value="UniProtKB-KW"/>
</dbReference>
<dbReference type="GO" id="GO:0005504">
    <property type="term" value="F:fatty acid binding"/>
    <property type="evidence" value="ECO:0007669"/>
    <property type="project" value="Ensembl"/>
</dbReference>
<dbReference type="GO" id="GO:0004859">
    <property type="term" value="F:phospholipase inhibitor activity"/>
    <property type="evidence" value="ECO:0007669"/>
    <property type="project" value="Ensembl"/>
</dbReference>
<dbReference type="GO" id="GO:0033344">
    <property type="term" value="P:cholesterol efflux"/>
    <property type="evidence" value="ECO:0007669"/>
    <property type="project" value="Ensembl"/>
</dbReference>
<dbReference type="GO" id="GO:0008203">
    <property type="term" value="P:cholesterol metabolic process"/>
    <property type="evidence" value="ECO:0000315"/>
    <property type="project" value="MGI"/>
</dbReference>
<dbReference type="GO" id="GO:0034382">
    <property type="term" value="P:chylomicron remnant clearance"/>
    <property type="evidence" value="ECO:0007669"/>
    <property type="project" value="Ensembl"/>
</dbReference>
<dbReference type="GO" id="GO:0042157">
    <property type="term" value="P:lipoprotein metabolic process"/>
    <property type="evidence" value="ECO:0007669"/>
    <property type="project" value="InterPro"/>
</dbReference>
<dbReference type="GO" id="GO:0032375">
    <property type="term" value="P:negative regulation of cholesterol transport"/>
    <property type="evidence" value="ECO:0007669"/>
    <property type="project" value="Ensembl"/>
</dbReference>
<dbReference type="GO" id="GO:0045717">
    <property type="term" value="P:negative regulation of fatty acid biosynthetic process"/>
    <property type="evidence" value="ECO:0007669"/>
    <property type="project" value="Ensembl"/>
</dbReference>
<dbReference type="GO" id="GO:0010900">
    <property type="term" value="P:negative regulation of phosphatidylcholine catabolic process"/>
    <property type="evidence" value="ECO:0007669"/>
    <property type="project" value="Ensembl"/>
</dbReference>
<dbReference type="GO" id="GO:0048261">
    <property type="term" value="P:negative regulation of receptor-mediated endocytosis"/>
    <property type="evidence" value="ECO:0007669"/>
    <property type="project" value="Ensembl"/>
</dbReference>
<dbReference type="GO" id="GO:0010897">
    <property type="term" value="P:negative regulation of triglyceride catabolic process"/>
    <property type="evidence" value="ECO:0007669"/>
    <property type="project" value="Ensembl"/>
</dbReference>
<dbReference type="GO" id="GO:0010916">
    <property type="term" value="P:negative regulation of very-low-density lipoprotein particle clearance"/>
    <property type="evidence" value="ECO:0007669"/>
    <property type="project" value="Ensembl"/>
</dbReference>
<dbReference type="GO" id="GO:0033700">
    <property type="term" value="P:phospholipid efflux"/>
    <property type="evidence" value="ECO:0007669"/>
    <property type="project" value="Ensembl"/>
</dbReference>
<dbReference type="GO" id="GO:0034369">
    <property type="term" value="P:plasma lipoprotein particle remodeling"/>
    <property type="evidence" value="ECO:0007669"/>
    <property type="project" value="Ensembl"/>
</dbReference>
<dbReference type="GO" id="GO:0070328">
    <property type="term" value="P:triglyceride homeostasis"/>
    <property type="evidence" value="ECO:0007669"/>
    <property type="project" value="Ensembl"/>
</dbReference>
<dbReference type="GO" id="GO:0006641">
    <property type="term" value="P:triglyceride metabolic process"/>
    <property type="evidence" value="ECO:0000315"/>
    <property type="project" value="MGI"/>
</dbReference>
<dbReference type="GO" id="GO:0034447">
    <property type="term" value="P:very-low-density lipoprotein particle clearance"/>
    <property type="evidence" value="ECO:0007669"/>
    <property type="project" value="Ensembl"/>
</dbReference>
<dbReference type="Gene3D" id="4.10.260.30">
    <property type="entry name" value="Apolipoprotein C-I"/>
    <property type="match status" value="1"/>
</dbReference>
<dbReference type="InterPro" id="IPR043081">
    <property type="entry name" value="ApoC-1_sf"/>
</dbReference>
<dbReference type="InterPro" id="IPR006781">
    <property type="entry name" value="ApoC-I"/>
</dbReference>
<dbReference type="PANTHER" id="PTHR16565">
    <property type="entry name" value="APOLIPOPROTEIN C-I"/>
    <property type="match status" value="1"/>
</dbReference>
<dbReference type="PANTHER" id="PTHR16565:SF2">
    <property type="entry name" value="APOLIPOPROTEIN C-I"/>
    <property type="match status" value="1"/>
</dbReference>
<dbReference type="Pfam" id="PF04691">
    <property type="entry name" value="ApoC-I"/>
    <property type="match status" value="1"/>
</dbReference>
<feature type="signal peptide" evidence="1">
    <location>
        <begin position="1"/>
        <end position="26"/>
    </location>
</feature>
<feature type="chain" id="PRO_0000002015" description="Apolipoprotein C-I">
    <location>
        <begin position="27"/>
        <end position="88"/>
    </location>
</feature>
<feature type="chain" id="PRO_0000391844" description="Truncated apolipoprotein C-I" evidence="4">
    <location>
        <begin position="29"/>
        <end position="88"/>
    </location>
</feature>